<name>RS2_THEKO</name>
<dbReference type="EMBL" id="AP006878">
    <property type="protein sequence ID" value="BAD85685.1"/>
    <property type="molecule type" value="Genomic_DNA"/>
</dbReference>
<dbReference type="RefSeq" id="WP_011250447.1">
    <property type="nucleotide sequence ID" value="NC_006624.1"/>
</dbReference>
<dbReference type="PDB" id="6SKF">
    <property type="method" value="EM"/>
    <property type="resolution" value="2.95 A"/>
    <property type="chains" value="Ab=1-201"/>
</dbReference>
<dbReference type="PDB" id="6SKG">
    <property type="method" value="EM"/>
    <property type="resolution" value="2.65 A"/>
    <property type="chains" value="Ab=1-201"/>
</dbReference>
<dbReference type="PDB" id="6TH6">
    <property type="method" value="EM"/>
    <property type="resolution" value="2.55 A"/>
    <property type="chains" value="Ab=1-201"/>
</dbReference>
<dbReference type="PDBsum" id="6SKF"/>
<dbReference type="PDBsum" id="6SKG"/>
<dbReference type="PDBsum" id="6TH6"/>
<dbReference type="EMDB" id="EMD-10223"/>
<dbReference type="EMDB" id="EMD-10224"/>
<dbReference type="EMDB" id="EMD-10503"/>
<dbReference type="SMR" id="Q5JJD2"/>
<dbReference type="FunCoup" id="Q5JJD2">
    <property type="interactions" value="145"/>
</dbReference>
<dbReference type="IntAct" id="Q5JJD2">
    <property type="interactions" value="1"/>
</dbReference>
<dbReference type="MINT" id="Q5JJD2"/>
<dbReference type="STRING" id="69014.TK1496"/>
<dbReference type="EnsemblBacteria" id="BAD85685">
    <property type="protein sequence ID" value="BAD85685"/>
    <property type="gene ID" value="TK1496"/>
</dbReference>
<dbReference type="GeneID" id="78448021"/>
<dbReference type="KEGG" id="tko:TK1496"/>
<dbReference type="PATRIC" id="fig|69014.16.peg.1456"/>
<dbReference type="eggNOG" id="arCOG04245">
    <property type="taxonomic scope" value="Archaea"/>
</dbReference>
<dbReference type="HOGENOM" id="CLU_058171_3_0_2"/>
<dbReference type="InParanoid" id="Q5JJD2"/>
<dbReference type="OrthoDB" id="371797at2157"/>
<dbReference type="PhylomeDB" id="Q5JJD2"/>
<dbReference type="Proteomes" id="UP000000536">
    <property type="component" value="Chromosome"/>
</dbReference>
<dbReference type="GO" id="GO:0022627">
    <property type="term" value="C:cytosolic small ribosomal subunit"/>
    <property type="evidence" value="ECO:0000318"/>
    <property type="project" value="GO_Central"/>
</dbReference>
<dbReference type="GO" id="GO:0003735">
    <property type="term" value="F:structural constituent of ribosome"/>
    <property type="evidence" value="ECO:0000318"/>
    <property type="project" value="GO_Central"/>
</dbReference>
<dbReference type="GO" id="GO:0000028">
    <property type="term" value="P:ribosomal small subunit assembly"/>
    <property type="evidence" value="ECO:0000318"/>
    <property type="project" value="GO_Central"/>
</dbReference>
<dbReference type="GO" id="GO:0006412">
    <property type="term" value="P:translation"/>
    <property type="evidence" value="ECO:0000318"/>
    <property type="project" value="GO_Central"/>
</dbReference>
<dbReference type="CDD" id="cd01425">
    <property type="entry name" value="RPS2"/>
    <property type="match status" value="1"/>
</dbReference>
<dbReference type="FunFam" id="3.40.50.10490:FF:000030">
    <property type="entry name" value="30S ribosomal protein S2"/>
    <property type="match status" value="1"/>
</dbReference>
<dbReference type="Gene3D" id="3.40.50.10490">
    <property type="entry name" value="Glucose-6-phosphate isomerase like protein, domain 1"/>
    <property type="match status" value="1"/>
</dbReference>
<dbReference type="HAMAP" id="MF_00291_A">
    <property type="entry name" value="Ribosomal_uS2_A"/>
    <property type="match status" value="1"/>
</dbReference>
<dbReference type="InterPro" id="IPR001865">
    <property type="entry name" value="Ribosomal_uS2"/>
</dbReference>
<dbReference type="InterPro" id="IPR023454">
    <property type="entry name" value="Ribosomal_uS2_arc"/>
</dbReference>
<dbReference type="InterPro" id="IPR018130">
    <property type="entry name" value="Ribosomal_uS2_CS"/>
</dbReference>
<dbReference type="InterPro" id="IPR005707">
    <property type="entry name" value="Ribosomal_uS2_euk/arc"/>
</dbReference>
<dbReference type="InterPro" id="IPR023591">
    <property type="entry name" value="Ribosomal_uS2_flav_dom_sf"/>
</dbReference>
<dbReference type="NCBIfam" id="TIGR01012">
    <property type="entry name" value="uS2_euk_arch"/>
    <property type="match status" value="1"/>
</dbReference>
<dbReference type="PANTHER" id="PTHR11489">
    <property type="entry name" value="40S RIBOSOMAL PROTEIN SA"/>
    <property type="match status" value="1"/>
</dbReference>
<dbReference type="Pfam" id="PF00318">
    <property type="entry name" value="Ribosomal_S2"/>
    <property type="match status" value="2"/>
</dbReference>
<dbReference type="PRINTS" id="PR00395">
    <property type="entry name" value="RIBOSOMALS2"/>
</dbReference>
<dbReference type="SUPFAM" id="SSF52313">
    <property type="entry name" value="Ribosomal protein S2"/>
    <property type="match status" value="1"/>
</dbReference>
<dbReference type="PROSITE" id="PS00962">
    <property type="entry name" value="RIBOSOMAL_S2_1"/>
    <property type="match status" value="1"/>
</dbReference>
<dbReference type="PROSITE" id="PS00963">
    <property type="entry name" value="RIBOSOMAL_S2_2"/>
    <property type="match status" value="1"/>
</dbReference>
<comment type="subunit">
    <text evidence="2">Part of the 50S ribosomal subunit.</text>
</comment>
<comment type="similarity">
    <text evidence="1">Belongs to the universal ribosomal protein uS2 family.</text>
</comment>
<gene>
    <name evidence="1" type="primary">rps2</name>
    <name type="ordered locus">TK1496</name>
</gene>
<protein>
    <recommendedName>
        <fullName evidence="1">Small ribosomal subunit protein uS2</fullName>
    </recommendedName>
    <alternativeName>
        <fullName evidence="3">30S ribosomal protein S2</fullName>
    </alternativeName>
</protein>
<sequence>MEEYLVPLDQYLAAGVHIGTQQKTKDMKKFIYRVRQDGLYVLDVRKTDERLRVAGKFLAKFDPESILAVSVRLYGQRPVKKFGEVTGAKAIPGRFLPGTMTNPQVKNFIEPDVLIVTDPRADHQALKEAVEIGIPIVALVDTENFLSYVDIAIPTNNKGRKALALIYWILAREVLYNRKEIESREDFKIPVEDFEMRIIRT</sequence>
<feature type="chain" id="PRO_0000134332" description="Small ribosomal subunit protein uS2">
    <location>
        <begin position="1"/>
        <end position="201"/>
    </location>
</feature>
<keyword id="KW-0002">3D-structure</keyword>
<keyword id="KW-1185">Reference proteome</keyword>
<keyword id="KW-0687">Ribonucleoprotein</keyword>
<keyword id="KW-0689">Ribosomal protein</keyword>
<accession>Q5JJD2</accession>
<proteinExistence type="evidence at protein level"/>
<organism>
    <name type="scientific">Thermococcus kodakarensis (strain ATCC BAA-918 / JCM 12380 / KOD1)</name>
    <name type="common">Pyrococcus kodakaraensis (strain KOD1)</name>
    <dbReference type="NCBI Taxonomy" id="69014"/>
    <lineage>
        <taxon>Archaea</taxon>
        <taxon>Methanobacteriati</taxon>
        <taxon>Methanobacteriota</taxon>
        <taxon>Thermococci</taxon>
        <taxon>Thermococcales</taxon>
        <taxon>Thermococcaceae</taxon>
        <taxon>Thermococcus</taxon>
    </lineage>
</organism>
<evidence type="ECO:0000255" key="1">
    <source>
        <dbReference type="HAMAP-Rule" id="MF_00291"/>
    </source>
</evidence>
<evidence type="ECO:0000269" key="2">
    <source>
    </source>
</evidence>
<evidence type="ECO:0000305" key="3"/>
<evidence type="ECO:0007744" key="4">
    <source>
        <dbReference type="PDB" id="6SKF"/>
    </source>
</evidence>
<evidence type="ECO:0007744" key="5">
    <source>
        <dbReference type="PDB" id="6SKG"/>
    </source>
</evidence>
<evidence type="ECO:0007744" key="6">
    <source>
        <dbReference type="PDB" id="6TH6"/>
    </source>
</evidence>
<reference key="1">
    <citation type="journal article" date="2005" name="Genome Res.">
        <title>Complete genome sequence of the hyperthermophilic archaeon Thermococcus kodakaraensis KOD1 and comparison with Pyrococcus genomes.</title>
        <authorList>
            <person name="Fukui T."/>
            <person name="Atomi H."/>
            <person name="Kanai T."/>
            <person name="Matsumi R."/>
            <person name="Fujiwara S."/>
            <person name="Imanaka T."/>
        </authorList>
    </citation>
    <scope>NUCLEOTIDE SEQUENCE [LARGE SCALE GENOMIC DNA]</scope>
    <source>
        <strain>ATCC BAA-918 / JCM 12380 / KOD1</strain>
    </source>
</reference>
<reference evidence="4 5 6" key="2">
    <citation type="journal article" date="2020" name="Nature">
        <title>Dynamic RNA acetylation revealed by quantitative cross-evolutionary mapping.</title>
        <authorList>
            <person name="Sas-Chen A."/>
            <person name="Thomas J.M."/>
            <person name="Matzov D."/>
            <person name="Taoka M."/>
            <person name="Nance K.D."/>
            <person name="Nir R."/>
            <person name="Bryson K.M."/>
            <person name="Shachar R."/>
            <person name="Liman G.L.S."/>
            <person name="Burkhart B.W."/>
            <person name="Gamage S.T."/>
            <person name="Nobe Y."/>
            <person name="Briney C.A."/>
            <person name="Levy M.J."/>
            <person name="Fuchs R.T."/>
            <person name="Robb G.B."/>
            <person name="Hartmann J."/>
            <person name="Sharma S."/>
            <person name="Lin Q."/>
            <person name="Florens L."/>
            <person name="Washburn M.P."/>
            <person name="Isobe T."/>
            <person name="Santangelo T.J."/>
            <person name="Shalev-Benami M."/>
            <person name="Meier J.L."/>
            <person name="Schwartz S."/>
        </authorList>
    </citation>
    <scope>STRUCTURE BY ELECTRON MICROSCOPY (2.55 ANGSTROMS) IN 70S RIBOSOME</scope>
    <scope>SUBUNIT</scope>
    <source>
        <strain>ATCC BAA-918 / TS559</strain>
    </source>
</reference>